<dbReference type="EMBL" id="AL353992">
    <property type="protein sequence ID" value="CAB89321.1"/>
    <property type="molecule type" value="Genomic_DNA"/>
</dbReference>
<dbReference type="EMBL" id="CP002686">
    <property type="protein sequence ID" value="AEE77987.1"/>
    <property type="molecule type" value="Genomic_DNA"/>
</dbReference>
<dbReference type="EMBL" id="BT011687">
    <property type="protein sequence ID" value="AAS49050.1"/>
    <property type="molecule type" value="mRNA"/>
</dbReference>
<dbReference type="EMBL" id="BT015382">
    <property type="protein sequence ID" value="AAU05505.1"/>
    <property type="molecule type" value="mRNA"/>
</dbReference>
<dbReference type="PIR" id="T48982">
    <property type="entry name" value="T48982"/>
</dbReference>
<dbReference type="RefSeq" id="NP_190092.1">
    <property type="nucleotide sequence ID" value="NM_114375.5"/>
</dbReference>
<dbReference type="SMR" id="Q9LXH0"/>
<dbReference type="BioGRID" id="8961">
    <property type="interactions" value="3"/>
</dbReference>
<dbReference type="FunCoup" id="Q9LXH0">
    <property type="interactions" value="371"/>
</dbReference>
<dbReference type="IntAct" id="Q9LXH0">
    <property type="interactions" value="1"/>
</dbReference>
<dbReference type="STRING" id="3702.Q9LXH0"/>
<dbReference type="iPTMnet" id="Q9LXH0"/>
<dbReference type="PaxDb" id="3702-AT3G45060.1"/>
<dbReference type="ProteomicsDB" id="250477"/>
<dbReference type="EnsemblPlants" id="AT3G45060.1">
    <property type="protein sequence ID" value="AT3G45060.1"/>
    <property type="gene ID" value="AT3G45060"/>
</dbReference>
<dbReference type="GeneID" id="823641"/>
<dbReference type="Gramene" id="AT3G45060.1">
    <property type="protein sequence ID" value="AT3G45060.1"/>
    <property type="gene ID" value="AT3G45060"/>
</dbReference>
<dbReference type="KEGG" id="ath:AT3G45060"/>
<dbReference type="Araport" id="AT3G45060"/>
<dbReference type="TAIR" id="AT3G45060">
    <property type="gene designation" value="NRT2.6"/>
</dbReference>
<dbReference type="eggNOG" id="ENOG502QPIC">
    <property type="taxonomic scope" value="Eukaryota"/>
</dbReference>
<dbReference type="HOGENOM" id="CLU_024204_0_0_1"/>
<dbReference type="InParanoid" id="Q9LXH0"/>
<dbReference type="OMA" id="ILWILQT"/>
<dbReference type="OrthoDB" id="434240at2759"/>
<dbReference type="PhylomeDB" id="Q9LXH0"/>
<dbReference type="PRO" id="PR:Q9LXH0"/>
<dbReference type="Proteomes" id="UP000006548">
    <property type="component" value="Chromosome 3"/>
</dbReference>
<dbReference type="ExpressionAtlas" id="Q9LXH0">
    <property type="expression patterns" value="baseline and differential"/>
</dbReference>
<dbReference type="GO" id="GO:0016020">
    <property type="term" value="C:membrane"/>
    <property type="evidence" value="ECO:0007669"/>
    <property type="project" value="UniProtKB-SubCell"/>
</dbReference>
<dbReference type="GO" id="GO:0015112">
    <property type="term" value="F:nitrate transmembrane transporter activity"/>
    <property type="evidence" value="ECO:0007669"/>
    <property type="project" value="InterPro"/>
</dbReference>
<dbReference type="GO" id="GO:0042128">
    <property type="term" value="P:nitrate assimilation"/>
    <property type="evidence" value="ECO:0007669"/>
    <property type="project" value="UniProtKB-KW"/>
</dbReference>
<dbReference type="CDD" id="cd17341">
    <property type="entry name" value="MFS_NRT2_like"/>
    <property type="match status" value="1"/>
</dbReference>
<dbReference type="FunFam" id="1.20.1250.20:FF:000048">
    <property type="entry name" value="High affinity nitrate transporter"/>
    <property type="match status" value="1"/>
</dbReference>
<dbReference type="FunFam" id="1.20.1250.20:FF:000053">
    <property type="entry name" value="Nitrate transporter 2.1"/>
    <property type="match status" value="1"/>
</dbReference>
<dbReference type="Gene3D" id="1.20.1250.20">
    <property type="entry name" value="MFS general substrate transporter like domains"/>
    <property type="match status" value="2"/>
</dbReference>
<dbReference type="InterPro" id="IPR011701">
    <property type="entry name" value="MFS"/>
</dbReference>
<dbReference type="InterPro" id="IPR020846">
    <property type="entry name" value="MFS_dom"/>
</dbReference>
<dbReference type="InterPro" id="IPR036259">
    <property type="entry name" value="MFS_trans_sf"/>
</dbReference>
<dbReference type="InterPro" id="IPR044772">
    <property type="entry name" value="NO3_transporter"/>
</dbReference>
<dbReference type="PANTHER" id="PTHR23515">
    <property type="entry name" value="HIGH-AFFINITY NITRATE TRANSPORTER 2.3"/>
    <property type="match status" value="1"/>
</dbReference>
<dbReference type="Pfam" id="PF07690">
    <property type="entry name" value="MFS_1"/>
    <property type="match status" value="1"/>
</dbReference>
<dbReference type="SUPFAM" id="SSF103473">
    <property type="entry name" value="MFS general substrate transporter"/>
    <property type="match status" value="1"/>
</dbReference>
<dbReference type="PROSITE" id="PS50850">
    <property type="entry name" value="MFS"/>
    <property type="match status" value="1"/>
</dbReference>
<evidence type="ECO:0000255" key="1"/>
<evidence type="ECO:0000256" key="2">
    <source>
        <dbReference type="SAM" id="MobiDB-lite"/>
    </source>
</evidence>
<evidence type="ECO:0000269" key="3">
    <source>
    </source>
</evidence>
<evidence type="ECO:0000269" key="4">
    <source>
    </source>
</evidence>
<evidence type="ECO:0000269" key="5">
    <source>
    </source>
</evidence>
<evidence type="ECO:0000269" key="6">
    <source>
    </source>
</evidence>
<evidence type="ECO:0000305" key="7"/>
<evidence type="ECO:0007744" key="8">
    <source>
    </source>
</evidence>
<accession>Q9LXH0</accession>
<sequence length="542" mass="58637">MAHNHSNEDGSIGTSLHGVTAREQVFSFSVQEDVPSSQAVRTNDPTAKFALPVDSEHRAKVFKPLSFAKPHMRAFHLGWISFFTCFISTFAAAPLVPVIRDNLDLTKTDIGNAGVASVSGAIFSRLAMGAVCDLLGARYGTAFSLMLTAPAVFSMSFVADAGSYLAVRFMIGFCLATFVSCQYWTSVMFTGKIIGLVNGCAGGWGDMGGGVTQLLMPMVFHVIKLTGATPFTAWRFAFFIPGILQIVMGILVLTLGQDLPDGNLSTLQKSGQVSKDKFSKVFWFAVKNYRTWILFMLYGFSMGVELTINNVISGYFYDRFNLTLHTAGIIAASFGMANFFARPFGGYASDVAARLFGMRGRLWILWILQTVGALFCIWLGRASSLPIAILAMMLFSMGTQAACGALFGVAPFVSRRSLGLISGLTGAGGNFGSGVTQLLFFSSSRFSTAEGLSLMGVMAVVCSLPVAFIHFPQWGSMFLRPSQDGEKSKEEHYYGAEWTEEEKSLGLHEGSIKFAENSRSERGRKAMLADIPTPETGSPAHV</sequence>
<protein>
    <recommendedName>
        <fullName>High affinity nitrate transporter 2.6</fullName>
        <shortName>AtNRT2:6</shortName>
    </recommendedName>
</protein>
<keyword id="KW-0472">Membrane</keyword>
<keyword id="KW-0534">Nitrate assimilation</keyword>
<keyword id="KW-0597">Phosphoprotein</keyword>
<keyword id="KW-1185">Reference proteome</keyword>
<keyword id="KW-0812">Transmembrane</keyword>
<keyword id="KW-1133">Transmembrane helix</keyword>
<organism>
    <name type="scientific">Arabidopsis thaliana</name>
    <name type="common">Mouse-ear cress</name>
    <dbReference type="NCBI Taxonomy" id="3702"/>
    <lineage>
        <taxon>Eukaryota</taxon>
        <taxon>Viridiplantae</taxon>
        <taxon>Streptophyta</taxon>
        <taxon>Embryophyta</taxon>
        <taxon>Tracheophyta</taxon>
        <taxon>Spermatophyta</taxon>
        <taxon>Magnoliopsida</taxon>
        <taxon>eudicotyledons</taxon>
        <taxon>Gunneridae</taxon>
        <taxon>Pentapetalae</taxon>
        <taxon>rosids</taxon>
        <taxon>malvids</taxon>
        <taxon>Brassicales</taxon>
        <taxon>Brassicaceae</taxon>
        <taxon>Camelineae</taxon>
        <taxon>Arabidopsis</taxon>
    </lineage>
</organism>
<reference key="1">
    <citation type="journal article" date="2000" name="Nature">
        <title>Sequence and analysis of chromosome 3 of the plant Arabidopsis thaliana.</title>
        <authorList>
            <person name="Salanoubat M."/>
            <person name="Lemcke K."/>
            <person name="Rieger M."/>
            <person name="Ansorge W."/>
            <person name="Unseld M."/>
            <person name="Fartmann B."/>
            <person name="Valle G."/>
            <person name="Bloecker H."/>
            <person name="Perez-Alonso M."/>
            <person name="Obermaier B."/>
            <person name="Delseny M."/>
            <person name="Boutry M."/>
            <person name="Grivell L.A."/>
            <person name="Mache R."/>
            <person name="Puigdomenech P."/>
            <person name="De Simone V."/>
            <person name="Choisne N."/>
            <person name="Artiguenave F."/>
            <person name="Robert C."/>
            <person name="Brottier P."/>
            <person name="Wincker P."/>
            <person name="Cattolico L."/>
            <person name="Weissenbach J."/>
            <person name="Saurin W."/>
            <person name="Quetier F."/>
            <person name="Schaefer M."/>
            <person name="Mueller-Auer S."/>
            <person name="Gabel C."/>
            <person name="Fuchs M."/>
            <person name="Benes V."/>
            <person name="Wurmbach E."/>
            <person name="Drzonek H."/>
            <person name="Erfle H."/>
            <person name="Jordan N."/>
            <person name="Bangert S."/>
            <person name="Wiedelmann R."/>
            <person name="Kranz H."/>
            <person name="Voss H."/>
            <person name="Holland R."/>
            <person name="Brandt P."/>
            <person name="Nyakatura G."/>
            <person name="Vezzi A."/>
            <person name="D'Angelo M."/>
            <person name="Pallavicini A."/>
            <person name="Toppo S."/>
            <person name="Simionati B."/>
            <person name="Conrad A."/>
            <person name="Hornischer K."/>
            <person name="Kauer G."/>
            <person name="Loehnert T.-H."/>
            <person name="Nordsiek G."/>
            <person name="Reichelt J."/>
            <person name="Scharfe M."/>
            <person name="Schoen O."/>
            <person name="Bargues M."/>
            <person name="Terol J."/>
            <person name="Climent J."/>
            <person name="Navarro P."/>
            <person name="Collado C."/>
            <person name="Perez-Perez A."/>
            <person name="Ottenwaelder B."/>
            <person name="Duchemin D."/>
            <person name="Cooke R."/>
            <person name="Laudie M."/>
            <person name="Berger-Llauro C."/>
            <person name="Purnelle B."/>
            <person name="Masuy D."/>
            <person name="de Haan M."/>
            <person name="Maarse A.C."/>
            <person name="Alcaraz J.-P."/>
            <person name="Cottet A."/>
            <person name="Casacuberta E."/>
            <person name="Monfort A."/>
            <person name="Argiriou A."/>
            <person name="Flores M."/>
            <person name="Liguori R."/>
            <person name="Vitale D."/>
            <person name="Mannhaupt G."/>
            <person name="Haase D."/>
            <person name="Schoof H."/>
            <person name="Rudd S."/>
            <person name="Zaccaria P."/>
            <person name="Mewes H.-W."/>
            <person name="Mayer K.F.X."/>
            <person name="Kaul S."/>
            <person name="Town C.D."/>
            <person name="Koo H.L."/>
            <person name="Tallon L.J."/>
            <person name="Jenkins J."/>
            <person name="Rooney T."/>
            <person name="Rizzo M."/>
            <person name="Walts A."/>
            <person name="Utterback T."/>
            <person name="Fujii C.Y."/>
            <person name="Shea T.P."/>
            <person name="Creasy T.H."/>
            <person name="Haas B."/>
            <person name="Maiti R."/>
            <person name="Wu D."/>
            <person name="Peterson J."/>
            <person name="Van Aken S."/>
            <person name="Pai G."/>
            <person name="Militscher J."/>
            <person name="Sellers P."/>
            <person name="Gill J.E."/>
            <person name="Feldblyum T.V."/>
            <person name="Preuss D."/>
            <person name="Lin X."/>
            <person name="Nierman W.C."/>
            <person name="Salzberg S.L."/>
            <person name="White O."/>
            <person name="Venter J.C."/>
            <person name="Fraser C.M."/>
            <person name="Kaneko T."/>
            <person name="Nakamura Y."/>
            <person name="Sato S."/>
            <person name="Kato T."/>
            <person name="Asamizu E."/>
            <person name="Sasamoto S."/>
            <person name="Kimura T."/>
            <person name="Idesawa K."/>
            <person name="Kawashima K."/>
            <person name="Kishida Y."/>
            <person name="Kiyokawa C."/>
            <person name="Kohara M."/>
            <person name="Matsumoto M."/>
            <person name="Matsuno A."/>
            <person name="Muraki A."/>
            <person name="Nakayama S."/>
            <person name="Nakazaki N."/>
            <person name="Shinpo S."/>
            <person name="Takeuchi C."/>
            <person name="Wada T."/>
            <person name="Watanabe A."/>
            <person name="Yamada M."/>
            <person name="Yasuda M."/>
            <person name="Tabata S."/>
        </authorList>
    </citation>
    <scope>NUCLEOTIDE SEQUENCE [LARGE SCALE GENOMIC DNA]</scope>
    <source>
        <strain>cv. Columbia</strain>
    </source>
</reference>
<reference key="2">
    <citation type="journal article" date="2017" name="Plant J.">
        <title>Araport11: a complete reannotation of the Arabidopsis thaliana reference genome.</title>
        <authorList>
            <person name="Cheng C.Y."/>
            <person name="Krishnakumar V."/>
            <person name="Chan A.P."/>
            <person name="Thibaud-Nissen F."/>
            <person name="Schobel S."/>
            <person name="Town C.D."/>
        </authorList>
    </citation>
    <scope>GENOME REANNOTATION</scope>
    <source>
        <strain>cv. Columbia</strain>
    </source>
</reference>
<reference key="3">
    <citation type="submission" date="2004-03" db="EMBL/GenBank/DDBJ databases">
        <title>Arabidopsis ORF clones.</title>
        <authorList>
            <person name="Cheuk R."/>
            <person name="Chen H."/>
            <person name="Kim C.J."/>
            <person name="Shinn P."/>
            <person name="Ecker J.R."/>
        </authorList>
    </citation>
    <scope>NUCLEOTIDE SEQUENCE [LARGE SCALE MRNA]</scope>
</reference>
<reference key="4">
    <citation type="journal article" date="2002" name="J. Exp. Bot.">
        <title>Nitrate transport in plants: which gene and which control?</title>
        <authorList>
            <person name="Orsel M."/>
            <person name="Filleur S."/>
            <person name="Fraisier V."/>
            <person name="Daniel-Vedele F."/>
        </authorList>
    </citation>
    <scope>GENE FAMILY</scope>
</reference>
<reference key="5">
    <citation type="journal article" date="2003" name="Plant Cell Physiol.">
        <title>Regulation of NRT1 and NRT2 gene families of Arabidopsis thaliana: responses to nitrate provision.</title>
        <authorList>
            <person name="Okamoto M."/>
            <person name="Vidmar J.J."/>
            <person name="Glass A.D."/>
        </authorList>
    </citation>
    <scope>TISSUE SPECIFICITY</scope>
    <scope>INDUCTION BY NITRATE</scope>
    <scope>GENE FAMILY</scope>
</reference>
<reference key="6">
    <citation type="journal article" date="2004" name="Planta">
        <title>Disruption of the nitrate transporter genes AtNRT2.1 and AtNRT2.2 restricts growth at low external nitrate concentration.</title>
        <authorList>
            <person name="Orsel M."/>
            <person name="Eulenburg K."/>
            <person name="Krapp A."/>
            <person name="Daniel-Vedele F."/>
        </authorList>
    </citation>
    <scope>FUNCTION</scope>
    <scope>INDUCTION BY NITRATE</scope>
</reference>
<reference key="7">
    <citation type="journal article" date="2006" name="Planta">
        <title>Nitrate-dependent control of root architecture and N nutrition are altered by a plant growth-promoting Phyllobacterium sp.</title>
        <authorList>
            <person name="Mantelin S."/>
            <person name="Desbrosses G."/>
            <person name="Larcher M."/>
            <person name="Tranbarger T.J."/>
            <person name="Cleyet-Marel J.C."/>
            <person name="Touraine B."/>
        </authorList>
    </citation>
    <scope>INDUCTION BY PHYLLOBACTERIUM</scope>
</reference>
<reference key="8">
    <citation type="journal article" date="2007" name="Biochem. Biophys. Res. Commun.">
        <title>Novel subsets of the Arabidopsis plasmalemma phosphoproteome identify phosphorylation sites in secondary active transporters.</title>
        <authorList>
            <person name="Hem S."/>
            <person name="Rofidal V."/>
            <person name="Sommerer N."/>
            <person name="Rossignol M."/>
        </authorList>
    </citation>
    <scope>PHOSPHORYLATION [LARGE SCALE ANALYSIS] AT THR-533 AND SER-538</scope>
    <scope>IDENTIFICATION BY MASS SPECTROMETRY [LARGE SCALE ANALYSIS]</scope>
</reference>
<reference key="9">
    <citation type="journal article" date="2007" name="FEBS Lett.">
        <title>Nitrate transporters and peptide transporters.</title>
        <authorList>
            <person name="Tsay Y.F."/>
            <person name="Chiu C.C."/>
            <person name="Tsai C.B."/>
            <person name="Ho C.H."/>
            <person name="Hsu P.K."/>
        </authorList>
    </citation>
    <scope>GENE FAMILY</scope>
</reference>
<reference key="10">
    <citation type="journal article" date="2013" name="New Phytol.">
        <title>The NRT2.5 and NRT2.6 genes are involved in growth promotion of Arabidopsis by the plant growth-promoting rhizobacterium (PGPR) strain Phyllobacterium brassicacearum STM196.</title>
        <authorList>
            <person name="Kechid M."/>
            <person name="Desbrosses G."/>
            <person name="Rokhsi W."/>
            <person name="Varoquaux F."/>
            <person name="Djekoun A."/>
            <person name="Touraine B."/>
        </authorList>
    </citation>
    <scope>FUNCTION</scope>
    <scope>DISRUPTION PHENOTYPE</scope>
    <scope>TISSUE SPECIFICITY</scope>
</reference>
<gene>
    <name type="primary">NRT2.6</name>
    <name type="ordered locus">At3g45060</name>
    <name type="ORF">F14D17.130</name>
</gene>
<name>NRT26_ARATH</name>
<comment type="function">
    <text evidence="4 6">Involved in high-affinity nitrate transport (PubMed:15107992). Required for the nitrate uptake-independent plant growth promotion and lateral root response to the rhizospheric Phyllobacterium (PubMed:23398541).</text>
</comment>
<comment type="subcellular location">
    <subcellularLocation>
        <location evidence="7">Membrane</location>
        <topology evidence="7">Multi-pass membrane protein</topology>
    </subcellularLocation>
</comment>
<comment type="tissue specificity">
    <text evidence="3 6">Expressed in roots and shoots (PubMed:12668777). Expressed in leaves (PubMed:23398541).</text>
</comment>
<comment type="induction">
    <text evidence="3 4 5">Not induced by nitrate or by growth on low nitrate concentration (PubMed:12668777, PubMed:15107992). Strongly up-regulated upon inoculation with the plant growth-promoting rhizobacteria Phyllobacterium (PubMed:16160849).</text>
</comment>
<comment type="disruption phenotype">
    <text evidence="6">Loss of plant growth and root system architecture responses to the rhizospheric Phyllobacterium.</text>
</comment>
<comment type="similarity">
    <text evidence="7">Belongs to the major facilitator superfamily. Nitrate/nitrite porter (TC 2.A.1.8) family.</text>
</comment>
<proteinExistence type="evidence at protein level"/>
<feature type="chain" id="PRO_0000400103" description="High affinity nitrate transporter 2.6">
    <location>
        <begin position="1"/>
        <end position="542"/>
    </location>
</feature>
<feature type="transmembrane region" description="Helical" evidence="1">
    <location>
        <begin position="79"/>
        <end position="99"/>
    </location>
</feature>
<feature type="transmembrane region" description="Helical" evidence="1">
    <location>
        <begin position="115"/>
        <end position="135"/>
    </location>
</feature>
<feature type="transmembrane region" description="Helical" evidence="1">
    <location>
        <begin position="139"/>
        <end position="159"/>
    </location>
</feature>
<feature type="transmembrane region" description="Helical" evidence="1">
    <location>
        <begin position="169"/>
        <end position="189"/>
    </location>
</feature>
<feature type="transmembrane region" description="Helical" evidence="1">
    <location>
        <begin position="193"/>
        <end position="213"/>
    </location>
</feature>
<feature type="transmembrane region" description="Helical" evidence="1">
    <location>
        <begin position="236"/>
        <end position="256"/>
    </location>
</feature>
<feature type="transmembrane region" description="Helical" evidence="1">
    <location>
        <begin position="292"/>
        <end position="312"/>
    </location>
</feature>
<feature type="transmembrane region" description="Helical" evidence="1">
    <location>
        <begin position="320"/>
        <end position="340"/>
    </location>
</feature>
<feature type="transmembrane region" description="Helical" evidence="1">
    <location>
        <begin position="362"/>
        <end position="382"/>
    </location>
</feature>
<feature type="transmembrane region" description="Helical" evidence="1">
    <location>
        <begin position="387"/>
        <end position="407"/>
    </location>
</feature>
<feature type="transmembrane region" description="Helical" evidence="1">
    <location>
        <begin position="421"/>
        <end position="441"/>
    </location>
</feature>
<feature type="transmembrane region" description="Helical" evidence="1">
    <location>
        <begin position="451"/>
        <end position="471"/>
    </location>
</feature>
<feature type="region of interest" description="Disordered" evidence="2">
    <location>
        <begin position="516"/>
        <end position="542"/>
    </location>
</feature>
<feature type="modified residue" description="Phosphothreonine" evidence="8">
    <location>
        <position position="533"/>
    </location>
</feature>
<feature type="modified residue" description="Phosphoserine" evidence="8">
    <location>
        <position position="538"/>
    </location>
</feature>